<proteinExistence type="evidence at transcript level"/>
<keyword id="KW-0025">Alternative splicing</keyword>
<keyword id="KW-1003">Cell membrane</keyword>
<keyword id="KW-1015">Disulfide bond</keyword>
<keyword id="KW-0325">Glycoprotein</keyword>
<keyword id="KW-0407">Ion channel</keyword>
<keyword id="KW-0406">Ion transport</keyword>
<keyword id="KW-0472">Membrane</keyword>
<keyword id="KW-0552">Olfaction</keyword>
<keyword id="KW-1185">Reference proteome</keyword>
<keyword id="KW-0677">Repeat</keyword>
<keyword id="KW-0691">RNA editing</keyword>
<keyword id="KW-0716">Sensory transduction</keyword>
<keyword id="KW-0915">Sodium</keyword>
<keyword id="KW-0894">Sodium channel</keyword>
<keyword id="KW-0739">Sodium transport</keyword>
<keyword id="KW-0812">Transmembrane</keyword>
<keyword id="KW-1133">Transmembrane helix</keyword>
<keyword id="KW-0813">Transport</keyword>
<keyword id="KW-0851">Voltage-gated channel</keyword>
<gene>
    <name type="primary">NaCP60E</name>
    <name evidence="18" type="synonym">DIC60</name>
    <name evidence="13" type="synonym">DSC1</name>
    <name evidence="12" type="synonym">smi60E</name>
    <name type="ORF">CG34405</name>
</gene>
<feature type="chain" id="PRO_0000291840" description="Sodium channel protein 60E">
    <location>
        <begin position="1"/>
        <end position="2844"/>
    </location>
</feature>
<feature type="topological domain" description="Cytoplasmic" evidence="14">
    <location>
        <begin position="1"/>
        <end position="121"/>
    </location>
</feature>
<feature type="transmembrane region" description="Helical; Name=S1 of repeat I" evidence="2">
    <location>
        <begin position="122"/>
        <end position="145"/>
    </location>
</feature>
<feature type="topological domain" description="Extracellular" evidence="14">
    <location>
        <begin position="146"/>
        <end position="151"/>
    </location>
</feature>
<feature type="transmembrane region" description="Helical; Name=S2 of repeat I" evidence="2">
    <location>
        <begin position="152"/>
        <end position="172"/>
    </location>
</feature>
<feature type="topological domain" description="Cytoplasmic" evidence="14">
    <location>
        <begin position="173"/>
        <end position="183"/>
    </location>
</feature>
<feature type="transmembrane region" description="Helical; Name=S3 of repeat I" evidence="2">
    <location>
        <begin position="184"/>
        <end position="202"/>
    </location>
</feature>
<feature type="topological domain" description="Extracellular" evidence="14">
    <location>
        <begin position="203"/>
        <end position="208"/>
    </location>
</feature>
<feature type="transmembrane region" description="Helical; Voltage-sensor; Name=S4 of repeat I" evidence="2">
    <location>
        <begin position="209"/>
        <end position="228"/>
    </location>
</feature>
<feature type="topological domain" description="Cytoplasmic" evidence="14">
    <location>
        <begin position="229"/>
        <end position="244"/>
    </location>
</feature>
<feature type="transmembrane region" description="Helical; Name=S5 of repeat I" evidence="2">
    <location>
        <begin position="245"/>
        <end position="265"/>
    </location>
</feature>
<feature type="topological domain" description="Extracellular" evidence="14">
    <location>
        <begin position="266"/>
        <end position="340"/>
    </location>
</feature>
<feature type="intramembrane region" description="Pore-forming" evidence="2">
    <location>
        <begin position="341"/>
        <end position="365"/>
    </location>
</feature>
<feature type="topological domain" description="Extracellular" evidence="14">
    <location>
        <begin position="366"/>
        <end position="374"/>
    </location>
</feature>
<feature type="transmembrane region" description="Helical; Name=S6 of repeat I" evidence="2">
    <location>
        <begin position="375"/>
        <end position="395"/>
    </location>
</feature>
<feature type="topological domain" description="Cytoplasmic" evidence="14">
    <location>
        <begin position="396"/>
        <end position="687"/>
    </location>
</feature>
<feature type="transmembrane region" description="Helical; Name=S1 of repeat II" evidence="2">
    <location>
        <begin position="688"/>
        <end position="708"/>
    </location>
</feature>
<feature type="topological domain" description="Extracellular" evidence="14">
    <location>
        <begin position="709"/>
        <end position="718"/>
    </location>
</feature>
<feature type="transmembrane region" description="Helical; Name=S2 of repeat II" evidence="2">
    <location>
        <begin position="719"/>
        <end position="743"/>
    </location>
</feature>
<feature type="topological domain" description="Cytoplasmic" evidence="14">
    <location>
        <begin position="744"/>
        <end position="749"/>
    </location>
</feature>
<feature type="transmembrane region" description="Helical; Name=S3 of repeat II" evidence="2">
    <location>
        <begin position="750"/>
        <end position="769"/>
    </location>
</feature>
<feature type="topological domain" description="Extracellular" evidence="14">
    <location>
        <begin position="770"/>
        <end position="775"/>
    </location>
</feature>
<feature type="transmembrane region" description="Helical; Voltage-sensor; Name=S4 of repeat II" evidence="1">
    <location>
        <begin position="776"/>
        <end position="795"/>
    </location>
</feature>
<feature type="topological domain" description="Cytoplasmic" evidence="14">
    <location>
        <begin position="796"/>
        <end position="810"/>
    </location>
</feature>
<feature type="transmembrane region" description="Helical; Name=S5 of repeat II" evidence="2">
    <location>
        <begin position="811"/>
        <end position="832"/>
    </location>
</feature>
<feature type="topological domain" description="Extracellular" evidence="14">
    <location>
        <begin position="833"/>
        <end position="852"/>
    </location>
</feature>
<feature type="intramembrane region" description="Pore-forming" evidence="2">
    <location>
        <begin position="853"/>
        <end position="873"/>
    </location>
</feature>
<feature type="topological domain" description="Extracellular" evidence="14">
    <location>
        <begin position="874"/>
        <end position="889"/>
    </location>
</feature>
<feature type="transmembrane region" description="Helical; Name=S6 of repeat II" evidence="2">
    <location>
        <begin position="890"/>
        <end position="910"/>
    </location>
</feature>
<feature type="topological domain" description="Cytoplasmic" evidence="14">
    <location>
        <begin position="911"/>
        <end position="1742"/>
    </location>
</feature>
<feature type="transmembrane region" description="Helical; Name=S1 of repeat III" evidence="2">
    <location>
        <begin position="1743"/>
        <end position="1763"/>
    </location>
</feature>
<feature type="topological domain" description="Extracellular" evidence="14">
    <location>
        <begin position="1764"/>
        <end position="1789"/>
    </location>
</feature>
<feature type="transmembrane region" description="Helical; Name=S2 of repeat III" evidence="2">
    <location>
        <begin position="1790"/>
        <end position="1810"/>
    </location>
</feature>
<feature type="topological domain" description="Cytoplasmic" evidence="14">
    <location>
        <begin position="1811"/>
        <end position="1813"/>
    </location>
</feature>
<feature type="transmembrane region" description="Helical; Name=S3 of repeat III" evidence="2">
    <location>
        <begin position="1814"/>
        <end position="1834"/>
    </location>
</feature>
<feature type="topological domain" description="Extracellular" evidence="14">
    <location>
        <begin position="1835"/>
        <end position="1839"/>
    </location>
</feature>
<feature type="transmembrane region" description="Helical; Voltage-sensor; Name=S4 of repeat III" evidence="2">
    <location>
        <begin position="1840"/>
        <end position="1861"/>
    </location>
</feature>
<feature type="topological domain" description="Cytoplasmic" evidence="14">
    <location>
        <begin position="1862"/>
        <end position="1880"/>
    </location>
</feature>
<feature type="transmembrane region" description="Helical; Name=S5 of repeat III" evidence="2">
    <location>
        <begin position="1881"/>
        <end position="1902"/>
    </location>
</feature>
<feature type="topological domain" description="Extracellular" evidence="14">
    <location>
        <begin position="1903"/>
        <end position="1943"/>
    </location>
</feature>
<feature type="intramembrane region" description="Pore-forming" evidence="2">
    <location>
        <begin position="1944"/>
        <end position="1965"/>
    </location>
</feature>
<feature type="topological domain" description="Extracellular" evidence="14">
    <location>
        <begin position="1966"/>
        <end position="1981"/>
    </location>
</feature>
<feature type="transmembrane region" description="Helical; Name=S6 of repeat III" evidence="2">
    <location>
        <begin position="1982"/>
        <end position="2002"/>
    </location>
</feature>
<feature type="topological domain" description="Cytoplasmic" evidence="14">
    <location>
        <begin position="2003"/>
        <end position="2069"/>
    </location>
</feature>
<feature type="transmembrane region" description="Helical; Name=S1 of repeat IV" evidence="2">
    <location>
        <begin position="2070"/>
        <end position="2090"/>
    </location>
</feature>
<feature type="topological domain" description="Extracellular" evidence="14">
    <location>
        <begin position="2091"/>
        <end position="2095"/>
    </location>
</feature>
<feature type="transmembrane region" description="Helical; Name=S2 of repeat IV" evidence="2">
    <location>
        <begin position="2096"/>
        <end position="2116"/>
    </location>
</feature>
<feature type="topological domain" description="Cytoplasmic" evidence="14">
    <location>
        <begin position="2117"/>
        <end position="2132"/>
    </location>
</feature>
<feature type="transmembrane region" description="Helical; Name=S3 of repeat IV" evidence="3">
    <location>
        <begin position="2133"/>
        <end position="2153"/>
    </location>
</feature>
<feature type="topological domain" description="Extracellular" evidence="14">
    <location>
        <begin position="2154"/>
        <end position="2162"/>
    </location>
</feature>
<feature type="transmembrane region" description="Helical; Voltage-sensor; Name=S4 of repeat IV" evidence="2">
    <location>
        <begin position="2163"/>
        <end position="2184"/>
    </location>
</feature>
<feature type="topological domain" description="Cytoplasmic" evidence="14">
    <location>
        <begin position="2185"/>
        <end position="2199"/>
    </location>
</feature>
<feature type="transmembrane region" description="Helical; Name=S5 of repeat IV" evidence="2">
    <location>
        <begin position="2200"/>
        <end position="2220"/>
    </location>
</feature>
<feature type="topological domain" description="Extracellular" evidence="14">
    <location>
        <begin position="2221"/>
        <end position="2236"/>
    </location>
</feature>
<feature type="intramembrane region" description="Pore-forming" evidence="2">
    <location>
        <begin position="2237"/>
        <end position="2259"/>
    </location>
</feature>
<feature type="topological domain" description="Extracellular" evidence="14">
    <location>
        <begin position="2260"/>
        <end position="2288"/>
    </location>
</feature>
<feature type="transmembrane region" description="Helical; Name=S6 of repeat IV" evidence="2">
    <location>
        <begin position="2289"/>
        <end position="2309"/>
    </location>
</feature>
<feature type="topological domain" description="Cytoplasmic" evidence="14">
    <location>
        <begin position="2310"/>
        <end position="2844"/>
    </location>
</feature>
<feature type="repeat" description="I" evidence="14">
    <location>
        <begin position="107"/>
        <end position="434"/>
    </location>
</feature>
<feature type="repeat" description="II" evidence="14">
    <location>
        <begin position="668"/>
        <end position="1130"/>
    </location>
</feature>
<feature type="repeat" description="III" evidence="14">
    <location>
        <begin position="1723"/>
        <end position="2040"/>
    </location>
</feature>
<feature type="repeat" description="IV" evidence="14">
    <location>
        <begin position="2050"/>
        <end position="2311"/>
    </location>
</feature>
<feature type="domain" description="IQ" evidence="4">
    <location>
        <begin position="2441"/>
        <end position="2470"/>
    </location>
</feature>
<feature type="region of interest" description="Disordered" evidence="6">
    <location>
        <begin position="452"/>
        <end position="610"/>
    </location>
</feature>
<feature type="region of interest" description="Disordered" evidence="6">
    <location>
        <begin position="1129"/>
        <end position="1166"/>
    </location>
</feature>
<feature type="region of interest" description="Disordered" evidence="6">
    <location>
        <begin position="1185"/>
        <end position="1224"/>
    </location>
</feature>
<feature type="region of interest" description="Disordered" evidence="6">
    <location>
        <begin position="1268"/>
        <end position="1288"/>
    </location>
</feature>
<feature type="region of interest" description="Disordered" evidence="6">
    <location>
        <begin position="1577"/>
        <end position="1630"/>
    </location>
</feature>
<feature type="region of interest" description="Disordered" evidence="6">
    <location>
        <begin position="1635"/>
        <end position="1654"/>
    </location>
</feature>
<feature type="region of interest" description="Disordered" evidence="6">
    <location>
        <begin position="2457"/>
        <end position="2479"/>
    </location>
</feature>
<feature type="region of interest" description="Disordered" evidence="6">
    <location>
        <begin position="2584"/>
        <end position="2668"/>
    </location>
</feature>
<feature type="region of interest" description="Disordered" evidence="6">
    <location>
        <begin position="2780"/>
        <end position="2802"/>
    </location>
</feature>
<feature type="region of interest" description="Disordered" evidence="6">
    <location>
        <begin position="2818"/>
        <end position="2844"/>
    </location>
</feature>
<feature type="compositionally biased region" description="Basic residues" evidence="6">
    <location>
        <begin position="455"/>
        <end position="465"/>
    </location>
</feature>
<feature type="compositionally biased region" description="Gly residues" evidence="6">
    <location>
        <begin position="469"/>
        <end position="479"/>
    </location>
</feature>
<feature type="compositionally biased region" description="Low complexity" evidence="6">
    <location>
        <begin position="511"/>
        <end position="520"/>
    </location>
</feature>
<feature type="compositionally biased region" description="Low complexity" evidence="6">
    <location>
        <begin position="577"/>
        <end position="586"/>
    </location>
</feature>
<feature type="compositionally biased region" description="Acidic residues" evidence="6">
    <location>
        <begin position="593"/>
        <end position="603"/>
    </location>
</feature>
<feature type="compositionally biased region" description="Polar residues" evidence="6">
    <location>
        <begin position="1129"/>
        <end position="1157"/>
    </location>
</feature>
<feature type="compositionally biased region" description="Low complexity" evidence="6">
    <location>
        <begin position="1191"/>
        <end position="1203"/>
    </location>
</feature>
<feature type="compositionally biased region" description="Basic and acidic residues" evidence="6">
    <location>
        <begin position="1204"/>
        <end position="1213"/>
    </location>
</feature>
<feature type="compositionally biased region" description="Polar residues" evidence="6">
    <location>
        <begin position="1277"/>
        <end position="1286"/>
    </location>
</feature>
<feature type="compositionally biased region" description="Polar residues" evidence="6">
    <location>
        <begin position="1604"/>
        <end position="1618"/>
    </location>
</feature>
<feature type="compositionally biased region" description="Polar residues" evidence="6">
    <location>
        <begin position="1640"/>
        <end position="1654"/>
    </location>
</feature>
<feature type="compositionally biased region" description="Polar residues" evidence="6">
    <location>
        <begin position="2467"/>
        <end position="2479"/>
    </location>
</feature>
<feature type="compositionally biased region" description="Low complexity" evidence="6">
    <location>
        <begin position="2595"/>
        <end position="2632"/>
    </location>
</feature>
<feature type="compositionally biased region" description="Basic residues" evidence="6">
    <location>
        <begin position="2647"/>
        <end position="2658"/>
    </location>
</feature>
<feature type="compositionally biased region" description="Polar residues" evidence="6">
    <location>
        <begin position="2825"/>
        <end position="2836"/>
    </location>
</feature>
<feature type="glycosylation site" description="N-linked (GlcNAc...) asparagine" evidence="5">
    <location>
        <position position="282"/>
    </location>
</feature>
<feature type="glycosylation site" description="N-linked (GlcNAc...) asparagine" evidence="5">
    <location>
        <position position="293"/>
    </location>
</feature>
<feature type="glycosylation site" description="N-linked (GlcNAc...) asparagine" evidence="5">
    <location>
        <position position="311"/>
    </location>
</feature>
<feature type="glycosylation site" description="N-linked (GlcNAc...) asparagine" evidence="5">
    <location>
        <position position="1778"/>
    </location>
</feature>
<feature type="glycosylation site" description="N-linked (GlcNAc...) asparagine" evidence="5">
    <location>
        <position position="1789"/>
    </location>
</feature>
<feature type="glycosylation site" description="N-linked (GlcNAc...) asparagine" evidence="5">
    <location>
        <position position="1930"/>
    </location>
</feature>
<feature type="disulfide bond" evidence="2">
    <location>
        <begin position="272"/>
        <end position="318"/>
    </location>
</feature>
<feature type="disulfide bond" evidence="2">
    <location>
        <begin position="875"/>
        <end position="887"/>
    </location>
</feature>
<feature type="splice variant" id="VSP_059322" description="In isoform P.">
    <original>DPHATQFIHFSQLSDFIASLDPPLGISKPNNVALVSFNLPISKGNKIHCLDILHALVKHVLGHVEETDN</original>
    <variation>VFSSDSRPSRRISPKAARQTIQRTLLTIPSDLLADTIHMPPNLYTSRNCPILLPLSIHHWASRSPIMSL</variation>
    <location>
        <begin position="2339"/>
        <end position="2407"/>
    </location>
</feature>
<feature type="splice variant" id="VSP_059323" description="In isoform P.">
    <location>
        <begin position="2408"/>
        <end position="2844"/>
    </location>
</feature>
<feature type="sequence variant" description="In RNA edited version." evidence="9 11">
    <original>M</original>
    <variation>V</variation>
    <location>
        <position position="2025"/>
    </location>
</feature>
<feature type="sequence conflict" description="In Ref. 1; ABF70206." evidence="14" ref="1">
    <original>S</original>
    <variation>G</variation>
    <location>
        <position position="2"/>
    </location>
</feature>
<feature type="sequence conflict" description="In Ref. 4; CAA32567." evidence="14" ref="4">
    <original>F</original>
    <variation>V</variation>
    <location>
        <position position="85"/>
    </location>
</feature>
<feature type="sequence conflict" description="In Ref. 1; ABF70206." evidence="14" ref="1">
    <original>R</original>
    <variation>Q</variation>
    <location>
        <position position="93"/>
    </location>
</feature>
<feature type="sequence conflict" description="In Ref. 4; CAA32567." evidence="14" ref="4">
    <original>SG</original>
    <variation>MR</variation>
    <location>
        <begin position="195"/>
        <end position="196"/>
    </location>
</feature>
<feature type="sequence conflict" description="In Ref. 4; CAA32567." evidence="14" ref="4">
    <original>L</original>
    <variation>V</variation>
    <location>
        <position position="253"/>
    </location>
</feature>
<feature type="sequence conflict" description="In Ref. 1; ABF70206." evidence="14" ref="1">
    <original>G</original>
    <variation>S</variation>
    <location>
        <position position="478"/>
    </location>
</feature>
<feature type="sequence conflict" description="In Ref. 1; ABF70206." evidence="14" ref="1">
    <original>H</original>
    <variation>D</variation>
    <location>
        <position position="487"/>
    </location>
</feature>
<feature type="sequence conflict" description="In Ref. 1; ABF70206." evidence="14" ref="1">
    <original>N</original>
    <variation>T</variation>
    <location>
        <position position="535"/>
    </location>
</feature>
<feature type="sequence conflict" description="In Ref. 1; ABF70206." evidence="14" ref="1">
    <original>Q</original>
    <variation>R</variation>
    <location>
        <position position="601"/>
    </location>
</feature>
<feature type="sequence conflict" description="In Ref. 4; CAA32568." evidence="14" ref="4">
    <original>V</original>
    <variation>A</variation>
    <location>
        <position position="785"/>
    </location>
</feature>
<feature type="sequence conflict" description="In Ref. 4; CAA32568." evidence="14" ref="4">
    <original>Q</original>
    <variation>K</variation>
    <location>
        <position position="790"/>
    </location>
</feature>
<feature type="sequence conflict" description="In Ref. 1; ABF70206." evidence="14" ref="1">
    <original>G</original>
    <variation>R</variation>
    <location>
        <position position="807"/>
    </location>
</feature>
<feature type="sequence conflict" description="In Ref. 4; CAA32568." evidence="14" ref="4">
    <original>T</original>
    <variation>R</variation>
    <location>
        <position position="813"/>
    </location>
</feature>
<feature type="sequence conflict" description="In Ref. 1; ABF70206." evidence="14" ref="1">
    <original>P</original>
    <variation>A</variation>
    <location>
        <position position="1052"/>
    </location>
</feature>
<feature type="sequence conflict" description="In Ref. 1; ABF70206." evidence="14" ref="1">
    <original>R</original>
    <variation>C</variation>
    <location>
        <position position="1114"/>
    </location>
</feature>
<feature type="sequence conflict" description="In Ref. 1; ABF70206." evidence="14" ref="1">
    <original>L</original>
    <variation>LRL</variation>
    <location>
        <position position="1125"/>
    </location>
</feature>
<feature type="sequence conflict" description="In Ref. 1; ABF70206." evidence="14" ref="1">
    <original>Y</original>
    <variation>C</variation>
    <location>
        <position position="1672"/>
    </location>
</feature>
<feature type="sequence conflict" description="In Ref. 4; CAA32569." evidence="14" ref="4">
    <original>HW</original>
    <variation>AL</variation>
    <location>
        <begin position="1736"/>
        <end position="1737"/>
    </location>
</feature>
<feature type="sequence conflict" description="In Ref. 1; ABF70206." evidence="14" ref="1">
    <original>T</original>
    <variation>A</variation>
    <location>
        <position position="1780"/>
    </location>
</feature>
<feature type="sequence conflict" description="In Ref. 4; CAA32569." evidence="14" ref="4">
    <original>M</original>
    <variation>N</variation>
    <location>
        <position position="1960"/>
    </location>
</feature>
<feature type="sequence conflict" description="In Ref. 4; CAA32569." evidence="14" ref="4">
    <original>Q</original>
    <variation>R</variation>
    <location>
        <position position="1977"/>
    </location>
</feature>
<feature type="sequence conflict" description="In Ref. 4; CAA32569." evidence="14" ref="4">
    <original>KK</original>
    <variation>RR</variation>
    <location>
        <begin position="2015"/>
        <end position="2016"/>
    </location>
</feature>
<feature type="sequence conflict" description="In Ref. 4; CAA32570." evidence="14" ref="4">
    <original>Y</original>
    <variation>I</variation>
    <location>
        <position position="2018"/>
    </location>
</feature>
<feature type="sequence conflict" description="In Ref. 4; CAA32571." evidence="14" ref="4">
    <original>VF</original>
    <variation>SV</variation>
    <location>
        <begin position="2133"/>
        <end position="2134"/>
    </location>
</feature>
<feature type="sequence conflict" description="In Ref. 4; CAA32571." evidence="14" ref="4">
    <original>R</original>
    <variation>Q</variation>
    <location>
        <position position="2246"/>
    </location>
</feature>
<feature type="sequence conflict" description="In Ref. 5; CAA59129." evidence="14" ref="5">
    <location>
        <begin position="2261"/>
        <end position="2263"/>
    </location>
</feature>
<feature type="sequence conflict" description="In Ref. 4; CAA32571." evidence="14" ref="4">
    <original>C</original>
    <variation>S</variation>
    <location>
        <position position="2279"/>
    </location>
</feature>
<feature type="sequence conflict" description="In Ref. 4; CAA32571." evidence="14" ref="4">
    <original>LH</original>
    <variation>FD</variation>
    <location>
        <begin position="2391"/>
        <end position="2392"/>
    </location>
</feature>
<feature type="sequence conflict" description="In Ref. 1; ABF70206." evidence="14" ref="1">
    <original>S</original>
    <variation>N</variation>
    <location sequence="Q9W0Y8-3">
        <position position="2347"/>
    </location>
</feature>
<feature type="sequence conflict" description="In Ref. 1; ABF70206." evidence="14" ref="1">
    <original>S</original>
    <variation>P</variation>
    <location sequence="Q9W0Y8-3">
        <position position="2400"/>
    </location>
</feature>
<name>SCN60_DROME</name>
<protein>
    <recommendedName>
        <fullName>Sodium channel protein 60E</fullName>
    </recommendedName>
    <alternativeName>
        <fullName>Drosophila ion channel 60</fullName>
    </alternativeName>
    <alternativeName>
        <fullName>Drosophila sodium channel 1</fullName>
    </alternativeName>
    <alternativeName>
        <fullName>Protein smell-impaired 60E</fullName>
    </alternativeName>
    <alternativeName>
        <fullName>Sodium channel 2</fullName>
        <shortName>DmNav2</shortName>
    </alternativeName>
</protein>
<comment type="function">
    <text evidence="8">Mediates the voltage-dependent sodium ion permeability of excitable membranes. Plays a role in processing of olfactory information during the olfactory avoidance response.</text>
</comment>
<comment type="subcellular location">
    <subcellularLocation>
        <location evidence="15">Cell membrane</location>
        <topology evidence="2">Multi-pass membrane protein</topology>
    </subcellularLocation>
</comment>
<comment type="alternative products">
    <event type="alternative splicing"/>
    <isoform>
        <id>Q9W0Y8-1</id>
        <name evidence="19">G</name>
        <name evidence="19">H</name>
        <sequence type="displayed"/>
    </isoform>
    <isoform>
        <id>Q9W0Y8-3</id>
        <name evidence="19">P</name>
        <sequence type="described" ref="VSP_059322 VSP_059323"/>
    </isoform>
</comment>
<comment type="tissue specificity">
    <text evidence="8 10">In embryonic and larval stages, expression is limited to very few non-neuronal cells in either the CNS or PNS. In pupal and adult stages, expressed in cell bodies of the fly central nervous system, including optic lobes, central brain, subesophageal ganglion, thoracico-abdominal ganglion, major olfactory organs, the third antennal segment and the maxillary palps.</text>
</comment>
<comment type="domain">
    <text evidence="14">The sequence contains 4 internal repeats, each with 5 hydrophobic segments (S1, S2, S3, S5, S6) and one positively charged segment (S4). Segments S4 are probably the voltage-sensors and are characterized by a series of positively charged amino acids at every third position.</text>
</comment>
<comment type="RNA editing">
    <location>
        <position position="2025" evidence="9 11"/>
    </location>
    <text evidence="9">Partially edited. Target of Adar.</text>
</comment>
<comment type="similarity">
    <text evidence="14">Belongs to the sodium channel (TC 1.A.1.10) family. NaCP60E subfamily.</text>
</comment>
<comment type="sequence caution" evidence="14">
    <conflict type="miscellaneous discrepancy">
        <sequence resource="EMBL-CDS" id="AAL25396"/>
    </conflict>
    <text>Intron retention.</text>
</comment>
<comment type="sequence caution" evidence="14">
    <conflict type="erroneous gene model prediction">
        <sequence resource="EMBL-CDS" id="CAA32567"/>
    </conflict>
</comment>
<comment type="sequence caution" evidence="14">
    <conflict type="erroneous gene model prediction">
        <sequence resource="EMBL-CDS" id="CAA32568"/>
    </conflict>
</comment>
<comment type="sequence caution" evidence="14">
    <conflict type="erroneous gene model prediction">
        <sequence resource="EMBL-CDS" id="CAA32569"/>
    </conflict>
</comment>
<sequence>MSDDQATFNDEKAVAKHQVVAYTQRSQVKHENRHIQLVREYGFHPRTKASVEDGDVLPRKFEPFPEHMYGKPLEEIDTFIYEETFCVVSKRFRKNYIHRFTGTKSLFLFYPWSPARRVCVYIATNQFFDYCVMATILFNCIFLAMTETVEEAEYIFLAIYSIEMVIKIIAKGFLLNKYTYLRNPWNWLDFVVITSGYATIGMEVGNLAGLRTFRVLRALKTVSIMPGLKTIINALLHSFRQLAEVMTLTIFCLMVFALFALQVYMGELRNKCVRQVPTDWTNVSHTDWQIWVNDTDNWLYDEDELPVLCGNLTGARHCPFEYVCLCVGENPNHGYTNFDNFMWSMLTTFQLITLDYWENVYNMVLATCGPMSVSFFTVVVFFGSFYLINLMLAVVALSYEEEAEITNEERKKDLLDHRDDSTFSFDPSVLNVKKLNKNNKKKIDSRKGVLLASYSKKKTRRKKTKGGKEGGTNGNGNGSNGDDNKSHSATPSPGPSPRHSATERPSALTMQAQKQYQQMEQQHKLAKSGSGGSNNPMAPTPKGRISFQDSGMGVKNPNMLYPSDYKGQLIANSGQPSSNSSGVNRESSQDDSGVVDDHEEQDTTNDMGHVSTVELALSPREVRLIKCNGNIARIKNHNVYALHQEFSSEVVVIDDLPDRNCDRCVHWCTDYESWLQFQNCLYKVVRDPLFELAITLCIVLNTAFLAMEHHGMSESFRNALDVGNKVFTSIFTFECIVKLMALSKDFFLCGWNIFDLLIVTASLLDIIFELVDGLSVLRGLRLLRVLKLAQSWTTMKVLLSIIISTIGALGNLTLILVIVIYIFAVIGMQLFSKDYTPEKFDPDPVPRWNFNDFFHSFMMIFRILCGEWIEPLWDCMRAEEEQGASTCFAIFLPTLVMGNFMVLNLFLALLLNSFNSEELKSKKEEVGEESKLARSIERVRDLIRKKRQERKDRKERKFAEKFQQIVLDAQQAHAQTLSHQAAVGLERGDKPGVLAETKFHRLSYQESMNRPVSGSDFGFQIPLHDGLHTIVDGLEYDDTGDLPEQIQLQAHPLPPTSDSMPPTYESAMMATTGGSFSSVNGNGTCQNLTPFVQAERRLQHQISSGVSTQQYDSREEATYTESIELLGQYNSTDTDPYANDQRSGCGSFNRGDSLQDNSSRRYGSEEHDEAFLKYQKSLLTRSPSYRKSLDRLSQSSGQSQRSLLKSEEAEMRRHSSGQSLNSMSIEQDELLSQQGNLREELLNCDQKELFQFLQEEEELQKGTKLRRISNVMRSRRPSSQMGQPENETMVEHSEFDNIIQSFEKELEEIKRSTTSLERKLSNLSEPSPAADEATKAIMEHIAIITGASERSAADEVVLPLNPYDSYDLSSVPRRSQSVSAAAQRQSVKLKRRSLEKQRKIDEDFSISNEIRKICDQIHAPFVAMEAMAVAATSASQAQPNQSPFLRRKVDPFTVQFDRFKRLSLIERVEEVPEEEKPISTLRIESEKMPRKFLHGPDQLRLDSLSLKSTNSYENLLIQKQKLGMATPPAVPATPPTSLKSSIEPPTLAQISSLKTTPPLAALTEHQQHFHATSIQAAPTPAHTHAHSQAHAHSMAGQRRRMEHPQSTLDKAASFQSARTESHSSGAADASSALALAMAQKTEQSQSTAPDATQKPSAFTRLTEKPWHCLVSYVDDLTVGGRRNSQGAYNDPMTFPSYGATKAAKVPDDCFPQKCYDHFYFRCPWFMSCMDTQSAKHWTRVRTAVLTVVDTPAFEWFVLVLIFASSITLCFEDINLDKNKTLKRVLYWINFSFCLIFVVEMILKWLALGFSKYFTSFWTILDFIIVFVSVFSLLIEENENLKVLRSLRTLRALRPLRAISRWQGMRIVVNALMYAIPSIFNVLLVCLVFWLIFSIMGVQFFGGKFFKCVNEMGELLPITEVNDKWDCIEQNYTWINSKITFDHVGMGYLALLQVATFEGWMEVMADAVDARGVDLQPQREANLYAYIYFVIFIVCGSFFTLNLFIGVIIDNFNMLKKKYEGGVLEMFLTESQKHYYTAMKKLGRKKPQKVIKRPINHFLAMFYDLSNSRRFEIAIFVLIFLNMLTMGIEHYDQPHAVFFILEVSNAFFTTVFGLEAIVKIVGLRYHYFTVPWNVFDFLLVLASIFGILMEDIMIDLPISPTLLRVVRVFRIGRILRLIKAAKGIRKLLFALVVSLPALFNIGALLGLITFIYAILGMSLFGNVKLQGALDDMVNFQTFGRSMQLLFRLMTSAGWNDVLESLMIQPPDCDPFIHGHTNGNCGHPLLAITYFTSFIIISYMIVINMYIAIILENFNQAHQEEEIGIVEDDLEMFYIRWSKYDPHATQFIHFSQLSDFIASLDPPLGISKPNNVALVSFNLPISKGNKIHCLDILHALVKHVLGHVEETDNFKQLQEQMDVKFKKQFPTRKELEIVSSTRIWKRQEKAAKTIQTGWKEYLRRKREKERSNSGDSATQTSSPGGWQSKLSALNFFHLQVSRRGTACSSRASSRKSSRASDASDLSELAGPWLNLPLMLVSGADEVVKDIKQQNDELGKRGSIFVEAPRASRRRSFYNFFLRHQDAVDDSLTSPSVHRKTAMNNTTNTTSNSASTSGTASSTATAPATGCGPAATSASDSDRHQAVGGGSAPSRKRASSFIRKKPPLERGLSAQSALRVNKNAFVSEASAPEVIVTRPSPEQQTHPHSLSLRPDNATLVHVLVHRESEEYKEEDESSPSVSGNGNGFGVGLDMLSKQPPPQIRITTGSVESSMDTCAMPTVQIMVDSPKDPPRGDFSSAPIDDVGAPIDVNVQGDTSQVFYDYNPEKATDDQGNGQDETAQFESLPDRQR</sequence>
<evidence type="ECO:0000250" key="1"/>
<evidence type="ECO:0000250" key="2">
    <source>
        <dbReference type="UniProtKB" id="D0E0C2"/>
    </source>
</evidence>
<evidence type="ECO:0000255" key="3"/>
<evidence type="ECO:0000255" key="4">
    <source>
        <dbReference type="PROSITE-ProRule" id="PRU00116"/>
    </source>
</evidence>
<evidence type="ECO:0000255" key="5">
    <source>
        <dbReference type="PROSITE-ProRule" id="PRU00498"/>
    </source>
</evidence>
<evidence type="ECO:0000256" key="6">
    <source>
        <dbReference type="SAM" id="MobiDB-lite"/>
    </source>
</evidence>
<evidence type="ECO:0000269" key="7">
    <source>
    </source>
</evidence>
<evidence type="ECO:0000269" key="8">
    <source>
    </source>
</evidence>
<evidence type="ECO:0000269" key="9">
    <source>
    </source>
</evidence>
<evidence type="ECO:0000269" key="10">
    <source>
    </source>
</evidence>
<evidence type="ECO:0000269" key="11">
    <source ref="1"/>
</evidence>
<evidence type="ECO:0000303" key="12">
    <source>
    </source>
</evidence>
<evidence type="ECO:0000303" key="13">
    <source>
    </source>
</evidence>
<evidence type="ECO:0000305" key="14"/>
<evidence type="ECO:0000305" key="15">
    <source>
    </source>
</evidence>
<evidence type="ECO:0000312" key="16">
    <source>
        <dbReference type="EMBL" id="AAL25396.1"/>
    </source>
</evidence>
<evidence type="ECO:0000312" key="17">
    <source>
        <dbReference type="EMBL" id="CAA32567.1"/>
    </source>
</evidence>
<evidence type="ECO:0000312" key="18">
    <source>
        <dbReference type="EMBL" id="CAA59129.1"/>
    </source>
</evidence>
<evidence type="ECO:0000312" key="19">
    <source>
        <dbReference type="FlyBase" id="FBgn0085434"/>
    </source>
</evidence>
<organism>
    <name type="scientific">Drosophila melanogaster</name>
    <name type="common">Fruit fly</name>
    <dbReference type="NCBI Taxonomy" id="7227"/>
    <lineage>
        <taxon>Eukaryota</taxon>
        <taxon>Metazoa</taxon>
        <taxon>Ecdysozoa</taxon>
        <taxon>Arthropoda</taxon>
        <taxon>Hexapoda</taxon>
        <taxon>Insecta</taxon>
        <taxon>Pterygota</taxon>
        <taxon>Neoptera</taxon>
        <taxon>Endopterygota</taxon>
        <taxon>Diptera</taxon>
        <taxon>Brachycera</taxon>
        <taxon>Muscomorpha</taxon>
        <taxon>Ephydroidea</taxon>
        <taxon>Drosophilidae</taxon>
        <taxon>Drosophila</taxon>
        <taxon>Sophophora</taxon>
    </lineage>
</organism>
<reference key="1">
    <citation type="submission" date="2006-03" db="EMBL/GenBank/DDBJ databases">
        <title>Functional characterization of the DSC1 channel.</title>
        <authorList>
            <person name="Song W."/>
            <person name="Liu Z."/>
            <person name="Nomura Y."/>
            <person name="Dong K."/>
        </authorList>
    </citation>
    <scope>NUCLEOTIDE SEQUENCE [MRNA] (ISOFORM P)</scope>
    <scope>RNA EDITING OF POSITION 2025</scope>
</reference>
<reference key="2">
    <citation type="journal article" date="2000" name="Science">
        <title>The genome sequence of Drosophila melanogaster.</title>
        <authorList>
            <person name="Adams M.D."/>
            <person name="Celniker S.E."/>
            <person name="Holt R.A."/>
            <person name="Evans C.A."/>
            <person name="Gocayne J.D."/>
            <person name="Amanatides P.G."/>
            <person name="Scherer S.E."/>
            <person name="Li P.W."/>
            <person name="Hoskins R.A."/>
            <person name="Galle R.F."/>
            <person name="George R.A."/>
            <person name="Lewis S.E."/>
            <person name="Richards S."/>
            <person name="Ashburner M."/>
            <person name="Henderson S.N."/>
            <person name="Sutton G.G."/>
            <person name="Wortman J.R."/>
            <person name="Yandell M.D."/>
            <person name="Zhang Q."/>
            <person name="Chen L.X."/>
            <person name="Brandon R.C."/>
            <person name="Rogers Y.-H.C."/>
            <person name="Blazej R.G."/>
            <person name="Champe M."/>
            <person name="Pfeiffer B.D."/>
            <person name="Wan K.H."/>
            <person name="Doyle C."/>
            <person name="Baxter E.G."/>
            <person name="Helt G."/>
            <person name="Nelson C.R."/>
            <person name="Miklos G.L.G."/>
            <person name="Abril J.F."/>
            <person name="Agbayani A."/>
            <person name="An H.-J."/>
            <person name="Andrews-Pfannkoch C."/>
            <person name="Baldwin D."/>
            <person name="Ballew R.M."/>
            <person name="Basu A."/>
            <person name="Baxendale J."/>
            <person name="Bayraktaroglu L."/>
            <person name="Beasley E.M."/>
            <person name="Beeson K.Y."/>
            <person name="Benos P.V."/>
            <person name="Berman B.P."/>
            <person name="Bhandari D."/>
            <person name="Bolshakov S."/>
            <person name="Borkova D."/>
            <person name="Botchan M.R."/>
            <person name="Bouck J."/>
            <person name="Brokstein P."/>
            <person name="Brottier P."/>
            <person name="Burtis K.C."/>
            <person name="Busam D.A."/>
            <person name="Butler H."/>
            <person name="Cadieu E."/>
            <person name="Center A."/>
            <person name="Chandra I."/>
            <person name="Cherry J.M."/>
            <person name="Cawley S."/>
            <person name="Dahlke C."/>
            <person name="Davenport L.B."/>
            <person name="Davies P."/>
            <person name="de Pablos B."/>
            <person name="Delcher A."/>
            <person name="Deng Z."/>
            <person name="Mays A.D."/>
            <person name="Dew I."/>
            <person name="Dietz S.M."/>
            <person name="Dodson K."/>
            <person name="Doup L.E."/>
            <person name="Downes M."/>
            <person name="Dugan-Rocha S."/>
            <person name="Dunkov B.C."/>
            <person name="Dunn P."/>
            <person name="Durbin K.J."/>
            <person name="Evangelista C.C."/>
            <person name="Ferraz C."/>
            <person name="Ferriera S."/>
            <person name="Fleischmann W."/>
            <person name="Fosler C."/>
            <person name="Gabrielian A.E."/>
            <person name="Garg N.S."/>
            <person name="Gelbart W.M."/>
            <person name="Glasser K."/>
            <person name="Glodek A."/>
            <person name="Gong F."/>
            <person name="Gorrell J.H."/>
            <person name="Gu Z."/>
            <person name="Guan P."/>
            <person name="Harris M."/>
            <person name="Harris N.L."/>
            <person name="Harvey D.A."/>
            <person name="Heiman T.J."/>
            <person name="Hernandez J.R."/>
            <person name="Houck J."/>
            <person name="Hostin D."/>
            <person name="Houston K.A."/>
            <person name="Howland T.J."/>
            <person name="Wei M.-H."/>
            <person name="Ibegwam C."/>
            <person name="Jalali M."/>
            <person name="Kalush F."/>
            <person name="Karpen G.H."/>
            <person name="Ke Z."/>
            <person name="Kennison J.A."/>
            <person name="Ketchum K.A."/>
            <person name="Kimmel B.E."/>
            <person name="Kodira C.D."/>
            <person name="Kraft C.L."/>
            <person name="Kravitz S."/>
            <person name="Kulp D."/>
            <person name="Lai Z."/>
            <person name="Lasko P."/>
            <person name="Lei Y."/>
            <person name="Levitsky A.A."/>
            <person name="Li J.H."/>
            <person name="Li Z."/>
            <person name="Liang Y."/>
            <person name="Lin X."/>
            <person name="Liu X."/>
            <person name="Mattei B."/>
            <person name="McIntosh T.C."/>
            <person name="McLeod M.P."/>
            <person name="McPherson D."/>
            <person name="Merkulov G."/>
            <person name="Milshina N.V."/>
            <person name="Mobarry C."/>
            <person name="Morris J."/>
            <person name="Moshrefi A."/>
            <person name="Mount S.M."/>
            <person name="Moy M."/>
            <person name="Murphy B."/>
            <person name="Murphy L."/>
            <person name="Muzny D.M."/>
            <person name="Nelson D.L."/>
            <person name="Nelson D.R."/>
            <person name="Nelson K.A."/>
            <person name="Nixon K."/>
            <person name="Nusskern D.R."/>
            <person name="Pacleb J.M."/>
            <person name="Palazzolo M."/>
            <person name="Pittman G.S."/>
            <person name="Pan S."/>
            <person name="Pollard J."/>
            <person name="Puri V."/>
            <person name="Reese M.G."/>
            <person name="Reinert K."/>
            <person name="Remington K."/>
            <person name="Saunders R.D.C."/>
            <person name="Scheeler F."/>
            <person name="Shen H."/>
            <person name="Shue B.C."/>
            <person name="Siden-Kiamos I."/>
            <person name="Simpson M."/>
            <person name="Skupski M.P."/>
            <person name="Smith T.J."/>
            <person name="Spier E."/>
            <person name="Spradling A.C."/>
            <person name="Stapleton M."/>
            <person name="Strong R."/>
            <person name="Sun E."/>
            <person name="Svirskas R."/>
            <person name="Tector C."/>
            <person name="Turner R."/>
            <person name="Venter E."/>
            <person name="Wang A.H."/>
            <person name="Wang X."/>
            <person name="Wang Z.-Y."/>
            <person name="Wassarman D.A."/>
            <person name="Weinstock G.M."/>
            <person name="Weissenbach J."/>
            <person name="Williams S.M."/>
            <person name="Woodage T."/>
            <person name="Worley K.C."/>
            <person name="Wu D."/>
            <person name="Yang S."/>
            <person name="Yao Q.A."/>
            <person name="Ye J."/>
            <person name="Yeh R.-F."/>
            <person name="Zaveri J.S."/>
            <person name="Zhan M."/>
            <person name="Zhang G."/>
            <person name="Zhao Q."/>
            <person name="Zheng L."/>
            <person name="Zheng X.H."/>
            <person name="Zhong F.N."/>
            <person name="Zhong W."/>
            <person name="Zhou X."/>
            <person name="Zhu S.C."/>
            <person name="Zhu X."/>
            <person name="Smith H.O."/>
            <person name="Gibbs R.A."/>
            <person name="Myers E.W."/>
            <person name="Rubin G.M."/>
            <person name="Venter J.C."/>
        </authorList>
    </citation>
    <scope>NUCLEOTIDE SEQUENCE [LARGE SCALE GENOMIC DNA]</scope>
    <source>
        <strain evidence="7">Berkeley</strain>
    </source>
</reference>
<reference evidence="14" key="3">
    <citation type="journal article" date="2002" name="Genome Biol.">
        <title>Annotation of the Drosophila melanogaster euchromatic genome: a systematic review.</title>
        <authorList>
            <person name="Misra S."/>
            <person name="Crosby M.A."/>
            <person name="Mungall C.J."/>
            <person name="Matthews B.B."/>
            <person name="Campbell K.S."/>
            <person name="Hradecky P."/>
            <person name="Huang Y."/>
            <person name="Kaminker J.S."/>
            <person name="Millburn G.H."/>
            <person name="Prochnik S.E."/>
            <person name="Smith C.D."/>
            <person name="Tupy J.L."/>
            <person name="Whitfield E.J."/>
            <person name="Bayraktaroglu L."/>
            <person name="Berman B.P."/>
            <person name="Bettencourt B.R."/>
            <person name="Celniker S.E."/>
            <person name="de Grey A.D.N.J."/>
            <person name="Drysdale R.A."/>
            <person name="Harris N.L."/>
            <person name="Richter J."/>
            <person name="Russo S."/>
            <person name="Schroeder A.J."/>
            <person name="Shu S.Q."/>
            <person name="Stapleton M."/>
            <person name="Yamada C."/>
            <person name="Ashburner M."/>
            <person name="Gelbart W.M."/>
            <person name="Rubin G.M."/>
            <person name="Lewis S.E."/>
        </authorList>
    </citation>
    <scope>GENOME REANNOTATION</scope>
    <source>
        <strain>Berkeley</strain>
    </source>
</reference>
<reference evidence="14 17" key="4">
    <citation type="journal article" date="1987" name="Nucleic Acids Res.">
        <title>Nucleotide sequence of the putative sodium channel gene from Drosophila: the four homologous domains.</title>
        <authorList>
            <person name="Salkoff L."/>
            <person name="Butler A."/>
            <person name="Scavarda N."/>
            <person name="Wei A."/>
        </authorList>
    </citation>
    <scope>NUCLEOTIDE SEQUENCE [GENOMIC DNA] OF 84-924 AND 1736-2430</scope>
</reference>
<reference evidence="14 18" key="5">
    <citation type="journal article" date="1987" name="Proc. Jpn. Acad., B, Phys. Biol. Sci.">
        <title>Isolation of Drosophila genomic clones homologous to the Eel sodium channel gene.</title>
        <authorList>
            <person name="Okamoto H."/>
            <person name="Sakai K."/>
            <person name="Goto S."/>
            <person name="Takasu-Ishikawa E."/>
            <person name="Hotta Y."/>
        </authorList>
    </citation>
    <scope>NUCLEOTIDE SEQUENCE [GENOMIC DNA] OF 2181-2316</scope>
</reference>
<reference key="6">
    <citation type="journal article" date="2002" name="Genome Biol.">
        <title>A Drosophila full-length cDNA resource.</title>
        <authorList>
            <person name="Stapleton M."/>
            <person name="Carlson J.W."/>
            <person name="Brokstein P."/>
            <person name="Yu C."/>
            <person name="Champe M."/>
            <person name="George R.A."/>
            <person name="Guarin H."/>
            <person name="Kronmiller B."/>
            <person name="Pacleb J.M."/>
            <person name="Park S."/>
            <person name="Wan K.H."/>
            <person name="Rubin G.M."/>
            <person name="Celniker S.E."/>
        </authorList>
    </citation>
    <scope>NUCLEOTIDE SEQUENCE [LARGE SCALE MRNA] OF 2164-2844 (ISOFORM G)</scope>
    <source>
        <strain>Berkeley</strain>
        <tissue evidence="16">Head</tissue>
    </source>
</reference>
<reference evidence="14" key="7">
    <citation type="journal article" date="1994" name="J. Neurosci.">
        <title>Spatial and temporal expression patterns of two sodium channel genes in Drosophila.</title>
        <authorList>
            <person name="Hong C.S."/>
            <person name="Ganetzky B."/>
        </authorList>
    </citation>
    <scope>TISSUE SPECIFICITY</scope>
</reference>
<reference evidence="14" key="8">
    <citation type="journal article" date="2002" name="Genetics">
        <title>The DSC1 channel, encoded by the smi60E locus, contributes to odor-guided behavior in Drosophila melanogaster.</title>
        <authorList>
            <person name="Kulkarni N.H."/>
            <person name="Yamamoto A.H."/>
            <person name="Robinson K.O."/>
            <person name="Mackay T.F.C."/>
            <person name="Anholt R.R."/>
        </authorList>
    </citation>
    <scope>FUNCTION</scope>
    <scope>SUBCELLULAR LOCATION</scope>
    <scope>TISSUE SPECIFICITY</scope>
</reference>
<reference evidence="14" key="9">
    <citation type="journal article" date="2003" name="Science">
        <title>Nervous system targets of RNA editing identified by comparative genomics.</title>
        <authorList>
            <person name="Hoopengardner B."/>
            <person name="Bhalla T."/>
            <person name="Staber C."/>
            <person name="Reenan R."/>
        </authorList>
    </citation>
    <scope>RNA EDITING OF POSITION 2025</scope>
</reference>
<accession>Q9W0Y8</accession>
<accession>A0A0B4KF50</accession>
<accession>A9NIV8</accession>
<accession>Q27930</accession>
<accession>Q7JN09</accession>
<accession>Q7JN86</accession>
<accession>Q7JN87</accession>
<accession>Q7JN88</accession>
<accession>Q7JN89</accession>
<accession>Q7K324</accession>
<accession>Q8MMC7</accession>
<dbReference type="EMBL" id="DQ466888">
    <property type="protein sequence ID" value="ABF70206.1"/>
    <property type="molecule type" value="mRNA"/>
</dbReference>
<dbReference type="EMBL" id="AE013599">
    <property type="protein sequence ID" value="AAF47291.6"/>
    <property type="molecule type" value="Genomic_DNA"/>
</dbReference>
<dbReference type="EMBL" id="AE013599">
    <property type="protein sequence ID" value="AGB93705.1"/>
    <property type="molecule type" value="Genomic_DNA"/>
</dbReference>
<dbReference type="EMBL" id="X14394">
    <property type="protein sequence ID" value="CAA32567.1"/>
    <property type="status" value="ALT_SEQ"/>
    <property type="molecule type" value="Genomic_DNA"/>
</dbReference>
<dbReference type="EMBL" id="X14395">
    <property type="protein sequence ID" value="CAA32568.1"/>
    <property type="status" value="ALT_SEQ"/>
    <property type="molecule type" value="Genomic_DNA"/>
</dbReference>
<dbReference type="EMBL" id="X14396">
    <property type="protein sequence ID" value="CAA32569.1"/>
    <property type="status" value="ALT_SEQ"/>
    <property type="molecule type" value="Genomic_DNA"/>
</dbReference>
<dbReference type="EMBL" id="X14397">
    <property type="protein sequence ID" value="CAA32570.1"/>
    <property type="molecule type" value="Genomic_DNA"/>
</dbReference>
<dbReference type="EMBL" id="X14398">
    <property type="protein sequence ID" value="CAA32571.1"/>
    <property type="molecule type" value="Genomic_DNA"/>
</dbReference>
<dbReference type="EMBL" id="X84409">
    <property type="protein sequence ID" value="CAA59129.1"/>
    <property type="molecule type" value="Genomic_DNA"/>
</dbReference>
<dbReference type="EMBL" id="AY060357">
    <property type="protein sequence ID" value="AAL25396.1"/>
    <property type="status" value="ALT_SEQ"/>
    <property type="molecule type" value="mRNA"/>
</dbReference>
<dbReference type="PIR" id="S04029">
    <property type="entry name" value="A60165"/>
</dbReference>
<dbReference type="RefSeq" id="NP_001189007.2">
    <molecule id="Q9W0Y8-1"/>
    <property type="nucleotide sequence ID" value="NM_001202078.3"/>
</dbReference>
<dbReference type="RefSeq" id="NP_001261175.1">
    <molecule id="Q9W0Y8-3"/>
    <property type="nucleotide sequence ID" value="NM_001274246.2"/>
</dbReference>
<dbReference type="RefSeq" id="NP_726495.3">
    <molecule id="Q9W0Y8-1"/>
    <property type="nucleotide sequence ID" value="NM_166696.5"/>
</dbReference>
<dbReference type="SMR" id="Q9W0Y8"/>
<dbReference type="BioGRID" id="63549">
    <property type="interactions" value="22"/>
</dbReference>
<dbReference type="FunCoup" id="Q9W0Y8">
    <property type="interactions" value="82"/>
</dbReference>
<dbReference type="IntAct" id="Q9W0Y8">
    <property type="interactions" value="6"/>
</dbReference>
<dbReference type="STRING" id="7227.FBpp0303273"/>
<dbReference type="TCDB" id="1.A.1.10.13">
    <property type="family name" value="the voltage-gated ion channel (vic) superfamily"/>
</dbReference>
<dbReference type="GlyCosmos" id="Q9W0Y8">
    <property type="glycosylation" value="6 sites, No reported glycans"/>
</dbReference>
<dbReference type="GlyGen" id="Q9W0Y8">
    <property type="glycosylation" value="9 sites"/>
</dbReference>
<dbReference type="PaxDb" id="7227-FBpp0300662"/>
<dbReference type="EnsemblMetazoa" id="FBtr0308342">
    <molecule id="Q9W0Y8-1"/>
    <property type="protein sequence ID" value="FBpp0300661"/>
    <property type="gene ID" value="FBgn0085434"/>
</dbReference>
<dbReference type="EnsemblMetazoa" id="FBtr0308343">
    <molecule id="Q9W0Y8-1"/>
    <property type="protein sequence ID" value="FBpp0300662"/>
    <property type="gene ID" value="FBgn0085434"/>
</dbReference>
<dbReference type="EnsemblMetazoa" id="FBtr0333817">
    <molecule id="Q9W0Y8-3"/>
    <property type="protein sequence ID" value="FBpp0305951"/>
    <property type="gene ID" value="FBgn0085434"/>
</dbReference>
<dbReference type="GeneID" id="37981"/>
<dbReference type="KEGG" id="dme:Dmel_CG34405"/>
<dbReference type="AGR" id="FB:FBgn0085434"/>
<dbReference type="CTD" id="37981"/>
<dbReference type="FlyBase" id="FBgn0085434">
    <property type="gene designation" value="NaCP60E"/>
</dbReference>
<dbReference type="VEuPathDB" id="VectorBase:FBgn0085434"/>
<dbReference type="eggNOG" id="KOG2301">
    <property type="taxonomic scope" value="Eukaryota"/>
</dbReference>
<dbReference type="GeneTree" id="ENSGT00940000167926"/>
<dbReference type="InParanoid" id="Q9W0Y8"/>
<dbReference type="OMA" id="HDQLRLD"/>
<dbReference type="OrthoDB" id="2984333at2759"/>
<dbReference type="SignaLink" id="Q9W0Y8"/>
<dbReference type="BioGRID-ORCS" id="37981">
    <property type="hits" value="0 hits in 1 CRISPR screen"/>
</dbReference>
<dbReference type="ChiTaRS" id="NaCP60E">
    <property type="organism name" value="fly"/>
</dbReference>
<dbReference type="GenomeRNAi" id="37981"/>
<dbReference type="PRO" id="PR:Q9W0Y8"/>
<dbReference type="Proteomes" id="UP000000803">
    <property type="component" value="Chromosome 2R"/>
</dbReference>
<dbReference type="Bgee" id="FBgn0085434">
    <property type="expression patterns" value="Expressed in centrifugal neuron C2 (Drosophila) in insect head and 265 other cell types or tissues"/>
</dbReference>
<dbReference type="ExpressionAtlas" id="Q9W0Y8">
    <property type="expression patterns" value="baseline and differential"/>
</dbReference>
<dbReference type="GO" id="GO:0005886">
    <property type="term" value="C:plasma membrane"/>
    <property type="evidence" value="ECO:0000250"/>
    <property type="project" value="FlyBase"/>
</dbReference>
<dbReference type="GO" id="GO:0001518">
    <property type="term" value="C:voltage-gated sodium channel complex"/>
    <property type="evidence" value="ECO:0000318"/>
    <property type="project" value="GO_Central"/>
</dbReference>
<dbReference type="GO" id="GO:0022843">
    <property type="term" value="F:voltage-gated monoatomic cation channel activity"/>
    <property type="evidence" value="ECO:0000314"/>
    <property type="project" value="FlyBase"/>
</dbReference>
<dbReference type="GO" id="GO:0005248">
    <property type="term" value="F:voltage-gated sodium channel activity"/>
    <property type="evidence" value="ECO:0000250"/>
    <property type="project" value="FlyBase"/>
</dbReference>
<dbReference type="GO" id="GO:0086010">
    <property type="term" value="P:membrane depolarization during action potential"/>
    <property type="evidence" value="ECO:0000318"/>
    <property type="project" value="GO_Central"/>
</dbReference>
<dbReference type="GO" id="GO:0019228">
    <property type="term" value="P:neuronal action potential"/>
    <property type="evidence" value="ECO:0000318"/>
    <property type="project" value="GO_Central"/>
</dbReference>
<dbReference type="GO" id="GO:0042048">
    <property type="term" value="P:olfactory behavior"/>
    <property type="evidence" value="ECO:0000315"/>
    <property type="project" value="FlyBase"/>
</dbReference>
<dbReference type="GO" id="GO:0007608">
    <property type="term" value="P:sensory perception of smell"/>
    <property type="evidence" value="ECO:0007669"/>
    <property type="project" value="UniProtKB-KW"/>
</dbReference>
<dbReference type="GO" id="GO:0035725">
    <property type="term" value="P:sodium ion transmembrane transport"/>
    <property type="evidence" value="ECO:0000250"/>
    <property type="project" value="FlyBase"/>
</dbReference>
<dbReference type="GO" id="GO:0006814">
    <property type="term" value="P:sodium ion transport"/>
    <property type="evidence" value="ECO:0000303"/>
    <property type="project" value="FlyBase"/>
</dbReference>
<dbReference type="CDD" id="cd13433">
    <property type="entry name" value="Na_channel_gate"/>
    <property type="match status" value="1"/>
</dbReference>
<dbReference type="FunFam" id="1.10.238.10:FF:000150">
    <property type="entry name" value="Sodium channel protein"/>
    <property type="match status" value="1"/>
</dbReference>
<dbReference type="FunFam" id="1.10.287.70:FF:000047">
    <property type="entry name" value="Sodium channel protein"/>
    <property type="match status" value="1"/>
</dbReference>
<dbReference type="FunFam" id="1.10.287.70:FF:000089">
    <property type="entry name" value="Sodium channel protein"/>
    <property type="match status" value="1"/>
</dbReference>
<dbReference type="FunFam" id="1.20.120.350:FF:000019">
    <property type="entry name" value="Sodium channel protein"/>
    <property type="match status" value="1"/>
</dbReference>
<dbReference type="FunFam" id="1.20.120.350:FF:000039">
    <property type="entry name" value="Sodium channel protein"/>
    <property type="match status" value="1"/>
</dbReference>
<dbReference type="FunFam" id="1.20.120.350:FF:000053">
    <property type="entry name" value="Sodium channel protein"/>
    <property type="match status" value="1"/>
</dbReference>
<dbReference type="FunFam" id="1.20.120.350:FF:000058">
    <property type="entry name" value="Sodium channel protein"/>
    <property type="match status" value="1"/>
</dbReference>
<dbReference type="FunFam" id="1.10.287.70:FF:000370">
    <property type="entry name" value="Sodium channel protein 60E"/>
    <property type="match status" value="1"/>
</dbReference>
<dbReference type="Gene3D" id="1.10.287.70">
    <property type="match status" value="4"/>
</dbReference>
<dbReference type="Gene3D" id="1.10.238.10">
    <property type="entry name" value="EF-hand"/>
    <property type="match status" value="1"/>
</dbReference>
<dbReference type="Gene3D" id="1.20.120.350">
    <property type="entry name" value="Voltage-gated potassium channels. Chain C"/>
    <property type="match status" value="4"/>
</dbReference>
<dbReference type="InterPro" id="IPR031649">
    <property type="entry name" value="GPHH_dom"/>
</dbReference>
<dbReference type="InterPro" id="IPR005821">
    <property type="entry name" value="Ion_trans_dom"/>
</dbReference>
<dbReference type="InterPro" id="IPR001696">
    <property type="entry name" value="Na_channel_asu"/>
</dbReference>
<dbReference type="InterPro" id="IPR044564">
    <property type="entry name" value="Na_chnl_inactivation_gate"/>
</dbReference>
<dbReference type="InterPro" id="IPR043203">
    <property type="entry name" value="VGCC_Ca_Na"/>
</dbReference>
<dbReference type="InterPro" id="IPR027359">
    <property type="entry name" value="Volt_channel_dom_sf"/>
</dbReference>
<dbReference type="PANTHER" id="PTHR10037:SF62">
    <property type="entry name" value="SODIUM CHANNEL PROTEIN 60E"/>
    <property type="match status" value="1"/>
</dbReference>
<dbReference type="PANTHER" id="PTHR10037">
    <property type="entry name" value="VOLTAGE-GATED CATION CHANNEL CALCIUM AND SODIUM"/>
    <property type="match status" value="1"/>
</dbReference>
<dbReference type="Pfam" id="PF16905">
    <property type="entry name" value="GPHH"/>
    <property type="match status" value="1"/>
</dbReference>
<dbReference type="Pfam" id="PF00520">
    <property type="entry name" value="Ion_trans"/>
    <property type="match status" value="4"/>
</dbReference>
<dbReference type="PRINTS" id="PR00170">
    <property type="entry name" value="NACHANNEL"/>
</dbReference>
<dbReference type="SUPFAM" id="SSF81324">
    <property type="entry name" value="Voltage-gated potassium channels"/>
    <property type="match status" value="4"/>
</dbReference>
<dbReference type="PROSITE" id="PS50096">
    <property type="entry name" value="IQ"/>
    <property type="match status" value="1"/>
</dbReference>